<dbReference type="EMBL" id="AJ247190">
    <property type="protein sequence ID" value="CAC05405.2"/>
    <property type="molecule type" value="Genomic_DNA"/>
</dbReference>
<dbReference type="GO" id="GO:0009507">
    <property type="term" value="C:chloroplast"/>
    <property type="evidence" value="ECO:0007669"/>
    <property type="project" value="UniProtKB-SubCell"/>
</dbReference>
<dbReference type="GO" id="GO:0003723">
    <property type="term" value="F:RNA binding"/>
    <property type="evidence" value="ECO:0007669"/>
    <property type="project" value="UniProtKB-KW"/>
</dbReference>
<dbReference type="GO" id="GO:0006397">
    <property type="term" value="P:mRNA processing"/>
    <property type="evidence" value="ECO:0007669"/>
    <property type="project" value="UniProtKB-KW"/>
</dbReference>
<dbReference type="GO" id="GO:0008380">
    <property type="term" value="P:RNA splicing"/>
    <property type="evidence" value="ECO:0007669"/>
    <property type="project" value="UniProtKB-UniRule"/>
</dbReference>
<dbReference type="GO" id="GO:0008033">
    <property type="term" value="P:tRNA processing"/>
    <property type="evidence" value="ECO:0007669"/>
    <property type="project" value="UniProtKB-KW"/>
</dbReference>
<dbReference type="HAMAP" id="MF_01390">
    <property type="entry name" value="MatK"/>
    <property type="match status" value="1"/>
</dbReference>
<dbReference type="InterPro" id="IPR024937">
    <property type="entry name" value="Domain_X"/>
</dbReference>
<dbReference type="InterPro" id="IPR002866">
    <property type="entry name" value="Maturase_MatK"/>
</dbReference>
<dbReference type="InterPro" id="IPR024942">
    <property type="entry name" value="Maturase_MatK_N"/>
</dbReference>
<dbReference type="PANTHER" id="PTHR34811">
    <property type="entry name" value="MATURASE K"/>
    <property type="match status" value="1"/>
</dbReference>
<dbReference type="PANTHER" id="PTHR34811:SF1">
    <property type="entry name" value="MATURASE K"/>
    <property type="match status" value="1"/>
</dbReference>
<dbReference type="Pfam" id="PF01348">
    <property type="entry name" value="Intron_maturas2"/>
    <property type="match status" value="1"/>
</dbReference>
<dbReference type="Pfam" id="PF01824">
    <property type="entry name" value="MatK_N"/>
    <property type="match status" value="1"/>
</dbReference>
<sequence length="507" mass="59855">MEELQGYLEMDGFRQQYFLYPFLFQEYIYALAHGHALNGSILYEPVENLDHDNKSSSLIVKRLITRMHQQNRLIISVNDSNQNRFVGHNNHFDSQMISEGFAVVVEIPFSLRLVSSLEEKEIAKSHNLRSIHSIFPFFEDKLSHLNHVSDILIPHPIHLEILVQTLHSWIQDTPSLHLLRFSLYEYWNSNSLITPKNSISLFSKENQRFFLFLSNSHVYECEFIFIFLRKQPFHLRSKSFGSFLERTHFYAKIEYLVVVLCNDFQKTLWLFKDPFMHYVRYQGKSILASRGARLLIKKWKSHLVNFWQCHFDLWSQPARIHIKQLYNHPFYFLGYLSSVRLNSSVIRSQMLENSFRIDTAIKKFETVVPIIPLIGSLAKAKFCNVSGHPISKPFRADLSDSEILNRFGRICRNLSHYHSGSSKKQSLYRIKYILRLSCARTLSRKHKSTIRAFLKRLGSEFLEEFFTEEEQALSLIFPTTSSPSHRSHRERIWYLDIIRINDLVSHL</sequence>
<comment type="function">
    <text evidence="1">Usually encoded in the trnK tRNA gene intron. Probably assists in splicing its own and other chloroplast group II introns.</text>
</comment>
<comment type="subcellular location">
    <subcellularLocation>
        <location>Plastid</location>
        <location>Chloroplast</location>
    </subcellularLocation>
</comment>
<comment type="similarity">
    <text evidence="1">Belongs to the intron maturase 2 family. MatK subfamily.</text>
</comment>
<reference key="1">
    <citation type="journal article" date="2000" name="Syst. Bot.">
        <title>Toward a phylogenetic classification of the Lauraceae: evidence from matK sequences.</title>
        <authorList>
            <person name="Rohwer J.G."/>
        </authorList>
        <dbReference type="AGRICOLA" id="IND22043295"/>
    </citation>
    <scope>NUCLEOTIDE SEQUENCE [GENOMIC DNA]</scope>
    <source>
        <tissue>Leaf</tissue>
    </source>
</reference>
<reference key="2">
    <citation type="submission" date="2005-03" db="EMBL/GenBank/DDBJ databases">
        <authorList>
            <person name="Rohwer J.G."/>
        </authorList>
    </citation>
    <scope>SEQUENCE REVISION</scope>
</reference>
<protein>
    <recommendedName>
        <fullName evidence="1">Maturase K</fullName>
    </recommendedName>
    <alternativeName>
        <fullName evidence="1">Intron maturase</fullName>
    </alternativeName>
</protein>
<name>MATK_UMBCA</name>
<geneLocation type="chloroplast"/>
<organism>
    <name type="scientific">Umbellularia californica</name>
    <name type="common">California bay laurel</name>
    <name type="synonym">Tetranthera californica</name>
    <dbReference type="NCBI Taxonomy" id="3438"/>
    <lineage>
        <taxon>Eukaryota</taxon>
        <taxon>Viridiplantae</taxon>
        <taxon>Streptophyta</taxon>
        <taxon>Embryophyta</taxon>
        <taxon>Tracheophyta</taxon>
        <taxon>Spermatophyta</taxon>
        <taxon>Magnoliopsida</taxon>
        <taxon>Magnoliidae</taxon>
        <taxon>Laurales</taxon>
        <taxon>Lauraceae</taxon>
        <taxon>Umbellularia</taxon>
    </lineage>
</organism>
<accession>Q9GHM0</accession>
<gene>
    <name evidence="1" type="primary">matK</name>
</gene>
<feature type="chain" id="PRO_0000143775" description="Maturase K">
    <location>
        <begin position="1"/>
        <end position="507"/>
    </location>
</feature>
<proteinExistence type="inferred from homology"/>
<evidence type="ECO:0000255" key="1">
    <source>
        <dbReference type="HAMAP-Rule" id="MF_01390"/>
    </source>
</evidence>
<keyword id="KW-0150">Chloroplast</keyword>
<keyword id="KW-0507">mRNA processing</keyword>
<keyword id="KW-0934">Plastid</keyword>
<keyword id="KW-0694">RNA-binding</keyword>
<keyword id="KW-0819">tRNA processing</keyword>